<accession>Q6D6D9</accession>
<dbReference type="EC" id="1.1.99.1" evidence="1"/>
<dbReference type="EC" id="1.2.1.8" evidence="1"/>
<dbReference type="EMBL" id="BX950851">
    <property type="protein sequence ID" value="CAG74651.1"/>
    <property type="molecule type" value="Genomic_DNA"/>
</dbReference>
<dbReference type="RefSeq" id="WP_011093322.1">
    <property type="nucleotide sequence ID" value="NC_004547.2"/>
</dbReference>
<dbReference type="SMR" id="Q6D6D9"/>
<dbReference type="STRING" id="218491.ECA1746"/>
<dbReference type="GeneID" id="57209541"/>
<dbReference type="KEGG" id="eca:ECA1746"/>
<dbReference type="PATRIC" id="fig|218491.5.peg.1773"/>
<dbReference type="eggNOG" id="COG2303">
    <property type="taxonomic scope" value="Bacteria"/>
</dbReference>
<dbReference type="HOGENOM" id="CLU_002865_7_1_6"/>
<dbReference type="OrthoDB" id="9785276at2"/>
<dbReference type="UniPathway" id="UPA00529">
    <property type="reaction ID" value="UER00385"/>
</dbReference>
<dbReference type="Proteomes" id="UP000007966">
    <property type="component" value="Chromosome"/>
</dbReference>
<dbReference type="GO" id="GO:0016020">
    <property type="term" value="C:membrane"/>
    <property type="evidence" value="ECO:0007669"/>
    <property type="project" value="TreeGrafter"/>
</dbReference>
<dbReference type="GO" id="GO:0008802">
    <property type="term" value="F:betaine-aldehyde dehydrogenase (NAD+) activity"/>
    <property type="evidence" value="ECO:0007669"/>
    <property type="project" value="UniProtKB-EC"/>
</dbReference>
<dbReference type="GO" id="GO:0008812">
    <property type="term" value="F:choline dehydrogenase activity"/>
    <property type="evidence" value="ECO:0007669"/>
    <property type="project" value="UniProtKB-UniRule"/>
</dbReference>
<dbReference type="GO" id="GO:0050660">
    <property type="term" value="F:flavin adenine dinucleotide binding"/>
    <property type="evidence" value="ECO:0007669"/>
    <property type="project" value="InterPro"/>
</dbReference>
<dbReference type="GO" id="GO:0019285">
    <property type="term" value="P:glycine betaine biosynthetic process from choline"/>
    <property type="evidence" value="ECO:0007669"/>
    <property type="project" value="UniProtKB-UniRule"/>
</dbReference>
<dbReference type="Gene3D" id="3.50.50.60">
    <property type="entry name" value="FAD/NAD(P)-binding domain"/>
    <property type="match status" value="1"/>
</dbReference>
<dbReference type="Gene3D" id="3.30.560.10">
    <property type="entry name" value="Glucose Oxidase, domain 3"/>
    <property type="match status" value="1"/>
</dbReference>
<dbReference type="HAMAP" id="MF_00750">
    <property type="entry name" value="Choline_dehydrogen"/>
    <property type="match status" value="1"/>
</dbReference>
<dbReference type="InterPro" id="IPR011533">
    <property type="entry name" value="BetA"/>
</dbReference>
<dbReference type="InterPro" id="IPR036188">
    <property type="entry name" value="FAD/NAD-bd_sf"/>
</dbReference>
<dbReference type="InterPro" id="IPR012132">
    <property type="entry name" value="GMC_OxRdtase"/>
</dbReference>
<dbReference type="InterPro" id="IPR000172">
    <property type="entry name" value="GMC_OxRdtase_N"/>
</dbReference>
<dbReference type="InterPro" id="IPR007867">
    <property type="entry name" value="GMC_OxRtase_C"/>
</dbReference>
<dbReference type="NCBIfam" id="TIGR01810">
    <property type="entry name" value="betA"/>
    <property type="match status" value="1"/>
</dbReference>
<dbReference type="NCBIfam" id="NF002550">
    <property type="entry name" value="PRK02106.1"/>
    <property type="match status" value="1"/>
</dbReference>
<dbReference type="PANTHER" id="PTHR11552:SF147">
    <property type="entry name" value="CHOLINE DEHYDROGENASE, MITOCHONDRIAL"/>
    <property type="match status" value="1"/>
</dbReference>
<dbReference type="PANTHER" id="PTHR11552">
    <property type="entry name" value="GLUCOSE-METHANOL-CHOLINE GMC OXIDOREDUCTASE"/>
    <property type="match status" value="1"/>
</dbReference>
<dbReference type="Pfam" id="PF05199">
    <property type="entry name" value="GMC_oxred_C"/>
    <property type="match status" value="1"/>
</dbReference>
<dbReference type="Pfam" id="PF00732">
    <property type="entry name" value="GMC_oxred_N"/>
    <property type="match status" value="1"/>
</dbReference>
<dbReference type="PIRSF" id="PIRSF000137">
    <property type="entry name" value="Alcohol_oxidase"/>
    <property type="match status" value="1"/>
</dbReference>
<dbReference type="SUPFAM" id="SSF54373">
    <property type="entry name" value="FAD-linked reductases, C-terminal domain"/>
    <property type="match status" value="1"/>
</dbReference>
<dbReference type="SUPFAM" id="SSF51905">
    <property type="entry name" value="FAD/NAD(P)-binding domain"/>
    <property type="match status" value="1"/>
</dbReference>
<dbReference type="PROSITE" id="PS00623">
    <property type="entry name" value="GMC_OXRED_1"/>
    <property type="match status" value="1"/>
</dbReference>
<dbReference type="PROSITE" id="PS00624">
    <property type="entry name" value="GMC_OXRED_2"/>
    <property type="match status" value="1"/>
</dbReference>
<proteinExistence type="inferred from homology"/>
<sequence>MEYDYIIIGAGSAGNVLAARLTEESDVSVLLLEAGGPDYRLDFRTQMPAALAFPLQGKRYNWAYETDPEPHMNDRRMECGRGKGLGGSSLINGMCYIRGNAMDFDHWATMSGLEDWSYLDCLPYFRKAETRDVGANDYHGASGPVSVTTPKMGNNELFHAMVEAGVQAGYPRTDDLNGYQQEGFGPMDRTVTPKGRRASTARGYLDQAKSRKNLTIVTHALTDRILFDGKRAVGVAYFKGESAQTAKARREVLLCAGAIASPQILQRSGVGPKDLLQRLDISVVHDLPGVGENLQDHLEMYLQYACKEPVSLYPALQWFNQPKIGAEWLFNGTGIGASNQFEAGGFIRSRDEFTWPNIQYHFLPVAINYNGSNAVKEHGFQAHVGSMRSLSRGRVQVRSKDAREHPSILFNYMSTEQDWQEFRDAIRITREIMAQPALDKYRGREISPGLAVQTDEELDEFIRTHAETAFHPSCSCKMGEDDMSVVDGQGCVHGMEGLRVVDASIMPQIITGNLNATTIMIAEKIADRIRRRQPLPRSKARYYVAGSTPVRKAPLKPAS</sequence>
<feature type="chain" id="PRO_0000258924" description="Oxygen-dependent choline dehydrogenase">
    <location>
        <begin position="1"/>
        <end position="559"/>
    </location>
</feature>
<feature type="region of interest" description="Disordered" evidence="2">
    <location>
        <begin position="182"/>
        <end position="202"/>
    </location>
</feature>
<feature type="active site" description="Proton acceptor" evidence="1">
    <location>
        <position position="471"/>
    </location>
</feature>
<feature type="binding site" evidence="1">
    <location>
        <begin position="4"/>
        <end position="33"/>
    </location>
    <ligand>
        <name>FAD</name>
        <dbReference type="ChEBI" id="CHEBI:57692"/>
    </ligand>
</feature>
<protein>
    <recommendedName>
        <fullName evidence="1">Oxygen-dependent choline dehydrogenase</fullName>
        <shortName evidence="1">CDH</shortName>
        <shortName evidence="1">CHD</shortName>
        <ecNumber evidence="1">1.1.99.1</ecNumber>
    </recommendedName>
    <alternativeName>
        <fullName evidence="1">Betaine aldehyde dehydrogenase</fullName>
        <shortName evidence="1">BADH</shortName>
        <ecNumber evidence="1">1.2.1.8</ecNumber>
    </alternativeName>
</protein>
<comment type="function">
    <text evidence="1">Involved in the biosynthesis of the osmoprotectant glycine betaine. Catalyzes the oxidation of choline to betaine aldehyde and betaine aldehyde to glycine betaine at the same rate.</text>
</comment>
<comment type="catalytic activity">
    <reaction evidence="1">
        <text>choline + A = betaine aldehyde + AH2</text>
        <dbReference type="Rhea" id="RHEA:17433"/>
        <dbReference type="ChEBI" id="CHEBI:13193"/>
        <dbReference type="ChEBI" id="CHEBI:15354"/>
        <dbReference type="ChEBI" id="CHEBI:15710"/>
        <dbReference type="ChEBI" id="CHEBI:17499"/>
        <dbReference type="EC" id="1.1.99.1"/>
    </reaction>
</comment>
<comment type="catalytic activity">
    <reaction evidence="1">
        <text>betaine aldehyde + NAD(+) + H2O = glycine betaine + NADH + 2 H(+)</text>
        <dbReference type="Rhea" id="RHEA:15305"/>
        <dbReference type="ChEBI" id="CHEBI:15377"/>
        <dbReference type="ChEBI" id="CHEBI:15378"/>
        <dbReference type="ChEBI" id="CHEBI:15710"/>
        <dbReference type="ChEBI" id="CHEBI:17750"/>
        <dbReference type="ChEBI" id="CHEBI:57540"/>
        <dbReference type="ChEBI" id="CHEBI:57945"/>
        <dbReference type="EC" id="1.2.1.8"/>
    </reaction>
</comment>
<comment type="cofactor">
    <cofactor evidence="1">
        <name>FAD</name>
        <dbReference type="ChEBI" id="CHEBI:57692"/>
    </cofactor>
</comment>
<comment type="pathway">
    <text evidence="1">Amine and polyamine biosynthesis; betaine biosynthesis via choline pathway; betaine aldehyde from choline (cytochrome c reductase route): step 1/1.</text>
</comment>
<comment type="similarity">
    <text evidence="1">Belongs to the GMC oxidoreductase family.</text>
</comment>
<keyword id="KW-0274">FAD</keyword>
<keyword id="KW-0285">Flavoprotein</keyword>
<keyword id="KW-0520">NAD</keyword>
<keyword id="KW-0560">Oxidoreductase</keyword>
<keyword id="KW-1185">Reference proteome</keyword>
<name>BETA_PECAS</name>
<reference key="1">
    <citation type="journal article" date="2004" name="Proc. Natl. Acad. Sci. U.S.A.">
        <title>Genome sequence of the enterobacterial phytopathogen Erwinia carotovora subsp. atroseptica and characterization of virulence factors.</title>
        <authorList>
            <person name="Bell K.S."/>
            <person name="Sebaihia M."/>
            <person name="Pritchard L."/>
            <person name="Holden M.T.G."/>
            <person name="Hyman L.J."/>
            <person name="Holeva M.C."/>
            <person name="Thomson N.R."/>
            <person name="Bentley S.D."/>
            <person name="Churcher L.J.C."/>
            <person name="Mungall K."/>
            <person name="Atkin R."/>
            <person name="Bason N."/>
            <person name="Brooks K."/>
            <person name="Chillingworth T."/>
            <person name="Clark K."/>
            <person name="Doggett J."/>
            <person name="Fraser A."/>
            <person name="Hance Z."/>
            <person name="Hauser H."/>
            <person name="Jagels K."/>
            <person name="Moule S."/>
            <person name="Norbertczak H."/>
            <person name="Ormond D."/>
            <person name="Price C."/>
            <person name="Quail M.A."/>
            <person name="Sanders M."/>
            <person name="Walker D."/>
            <person name="Whitehead S."/>
            <person name="Salmond G.P.C."/>
            <person name="Birch P.R.J."/>
            <person name="Parkhill J."/>
            <person name="Toth I.K."/>
        </authorList>
    </citation>
    <scope>NUCLEOTIDE SEQUENCE [LARGE SCALE GENOMIC DNA]</scope>
    <source>
        <strain>SCRI 1043 / ATCC BAA-672</strain>
    </source>
</reference>
<gene>
    <name evidence="1" type="primary">betA</name>
    <name type="ordered locus">ECA1746</name>
</gene>
<evidence type="ECO:0000255" key="1">
    <source>
        <dbReference type="HAMAP-Rule" id="MF_00750"/>
    </source>
</evidence>
<evidence type="ECO:0000256" key="2">
    <source>
        <dbReference type="SAM" id="MobiDB-lite"/>
    </source>
</evidence>
<organism>
    <name type="scientific">Pectobacterium atrosepticum (strain SCRI 1043 / ATCC BAA-672)</name>
    <name type="common">Erwinia carotovora subsp. atroseptica</name>
    <dbReference type="NCBI Taxonomy" id="218491"/>
    <lineage>
        <taxon>Bacteria</taxon>
        <taxon>Pseudomonadati</taxon>
        <taxon>Pseudomonadota</taxon>
        <taxon>Gammaproteobacteria</taxon>
        <taxon>Enterobacterales</taxon>
        <taxon>Pectobacteriaceae</taxon>
        <taxon>Pectobacterium</taxon>
    </lineage>
</organism>